<accession>B7IST7</accession>
<reference key="1">
    <citation type="submission" date="2008-10" db="EMBL/GenBank/DDBJ databases">
        <title>Genome sequence of Bacillus cereus G9842.</title>
        <authorList>
            <person name="Dodson R.J."/>
            <person name="Durkin A.S."/>
            <person name="Rosovitz M.J."/>
            <person name="Rasko D.A."/>
            <person name="Hoffmaster A."/>
            <person name="Ravel J."/>
            <person name="Sutton G."/>
        </authorList>
    </citation>
    <scope>NUCLEOTIDE SEQUENCE [LARGE SCALE GENOMIC DNA]</scope>
    <source>
        <strain>G9842</strain>
    </source>
</reference>
<keyword id="KW-0255">Endonuclease</keyword>
<keyword id="KW-0378">Hydrolase</keyword>
<keyword id="KW-0540">Nuclease</keyword>
<keyword id="KW-0694">RNA-binding</keyword>
<keyword id="KW-0819">tRNA processing</keyword>
<proteinExistence type="inferred from homology"/>
<dbReference type="EC" id="3.1.26.5" evidence="1"/>
<dbReference type="EMBL" id="CP001186">
    <property type="protein sequence ID" value="ACK95375.1"/>
    <property type="molecule type" value="Genomic_DNA"/>
</dbReference>
<dbReference type="RefSeq" id="WP_000726621.1">
    <property type="nucleotide sequence ID" value="NC_011772.1"/>
</dbReference>
<dbReference type="SMR" id="B7IST7"/>
<dbReference type="GeneID" id="72452137"/>
<dbReference type="KEGG" id="bcg:BCG9842_B5321"/>
<dbReference type="HOGENOM" id="CLU_117179_9_1_9"/>
<dbReference type="Proteomes" id="UP000006744">
    <property type="component" value="Chromosome"/>
</dbReference>
<dbReference type="GO" id="GO:0030677">
    <property type="term" value="C:ribonuclease P complex"/>
    <property type="evidence" value="ECO:0007669"/>
    <property type="project" value="TreeGrafter"/>
</dbReference>
<dbReference type="GO" id="GO:0042781">
    <property type="term" value="F:3'-tRNA processing endoribonuclease activity"/>
    <property type="evidence" value="ECO:0007669"/>
    <property type="project" value="TreeGrafter"/>
</dbReference>
<dbReference type="GO" id="GO:0004526">
    <property type="term" value="F:ribonuclease P activity"/>
    <property type="evidence" value="ECO:0007669"/>
    <property type="project" value="UniProtKB-UniRule"/>
</dbReference>
<dbReference type="GO" id="GO:0000049">
    <property type="term" value="F:tRNA binding"/>
    <property type="evidence" value="ECO:0007669"/>
    <property type="project" value="UniProtKB-UniRule"/>
</dbReference>
<dbReference type="GO" id="GO:0001682">
    <property type="term" value="P:tRNA 5'-leader removal"/>
    <property type="evidence" value="ECO:0007669"/>
    <property type="project" value="UniProtKB-UniRule"/>
</dbReference>
<dbReference type="FunFam" id="3.30.230.10:FF:000021">
    <property type="entry name" value="Ribonuclease P protein component"/>
    <property type="match status" value="1"/>
</dbReference>
<dbReference type="Gene3D" id="3.30.230.10">
    <property type="match status" value="1"/>
</dbReference>
<dbReference type="HAMAP" id="MF_00227">
    <property type="entry name" value="RNase_P"/>
    <property type="match status" value="1"/>
</dbReference>
<dbReference type="InterPro" id="IPR020568">
    <property type="entry name" value="Ribosomal_Su5_D2-typ_SF"/>
</dbReference>
<dbReference type="InterPro" id="IPR014721">
    <property type="entry name" value="Ribsml_uS5_D2-typ_fold_subgr"/>
</dbReference>
<dbReference type="InterPro" id="IPR000100">
    <property type="entry name" value="RNase_P"/>
</dbReference>
<dbReference type="InterPro" id="IPR020539">
    <property type="entry name" value="RNase_P_CS"/>
</dbReference>
<dbReference type="NCBIfam" id="TIGR00188">
    <property type="entry name" value="rnpA"/>
    <property type="match status" value="1"/>
</dbReference>
<dbReference type="PANTHER" id="PTHR33992">
    <property type="entry name" value="RIBONUCLEASE P PROTEIN COMPONENT"/>
    <property type="match status" value="1"/>
</dbReference>
<dbReference type="PANTHER" id="PTHR33992:SF1">
    <property type="entry name" value="RIBONUCLEASE P PROTEIN COMPONENT"/>
    <property type="match status" value="1"/>
</dbReference>
<dbReference type="Pfam" id="PF00825">
    <property type="entry name" value="Ribonuclease_P"/>
    <property type="match status" value="1"/>
</dbReference>
<dbReference type="SUPFAM" id="SSF54211">
    <property type="entry name" value="Ribosomal protein S5 domain 2-like"/>
    <property type="match status" value="1"/>
</dbReference>
<dbReference type="PROSITE" id="PS00648">
    <property type="entry name" value="RIBONUCLEASE_P"/>
    <property type="match status" value="1"/>
</dbReference>
<gene>
    <name evidence="1" type="primary">rnpA</name>
    <name type="ordered locus">BCG9842_B5321</name>
</gene>
<organism>
    <name type="scientific">Bacillus cereus (strain G9842)</name>
    <dbReference type="NCBI Taxonomy" id="405531"/>
    <lineage>
        <taxon>Bacteria</taxon>
        <taxon>Bacillati</taxon>
        <taxon>Bacillota</taxon>
        <taxon>Bacilli</taxon>
        <taxon>Bacillales</taxon>
        <taxon>Bacillaceae</taxon>
        <taxon>Bacillus</taxon>
        <taxon>Bacillus cereus group</taxon>
    </lineage>
</organism>
<name>RNPA_BACC2</name>
<sequence>MKKKHRIKKNDEFQAVFQKGKSNANRQFVVYQLDKEEQPNFRIGLSVSKKIGNAVVRNRIKRMVRQAITELKDEIDSGKDFVIIARKPCAEMTYEEVKKSLIHVFKRSGMKRIKK</sequence>
<evidence type="ECO:0000255" key="1">
    <source>
        <dbReference type="HAMAP-Rule" id="MF_00227"/>
    </source>
</evidence>
<feature type="chain" id="PRO_1000194606" description="Ribonuclease P protein component">
    <location>
        <begin position="1"/>
        <end position="115"/>
    </location>
</feature>
<comment type="function">
    <text evidence="1">RNaseP catalyzes the removal of the 5'-leader sequence from pre-tRNA to produce the mature 5'-terminus. It can also cleave other RNA substrates such as 4.5S RNA. The protein component plays an auxiliary but essential role in vivo by binding to the 5'-leader sequence and broadening the substrate specificity of the ribozyme.</text>
</comment>
<comment type="catalytic activity">
    <reaction evidence="1">
        <text>Endonucleolytic cleavage of RNA, removing 5'-extranucleotides from tRNA precursor.</text>
        <dbReference type="EC" id="3.1.26.5"/>
    </reaction>
</comment>
<comment type="subunit">
    <text evidence="1">Consists of a catalytic RNA component (M1 or rnpB) and a protein subunit.</text>
</comment>
<comment type="similarity">
    <text evidence="1">Belongs to the RnpA family.</text>
</comment>
<protein>
    <recommendedName>
        <fullName evidence="1">Ribonuclease P protein component</fullName>
        <shortName evidence="1">RNase P protein</shortName>
        <shortName evidence="1">RNaseP protein</shortName>
        <ecNumber evidence="1">3.1.26.5</ecNumber>
    </recommendedName>
    <alternativeName>
        <fullName evidence="1">Protein C5</fullName>
    </alternativeName>
</protein>